<name>FMT_EDWI9</name>
<reference key="1">
    <citation type="submission" date="2009-03" db="EMBL/GenBank/DDBJ databases">
        <title>Complete genome sequence of Edwardsiella ictaluri 93-146.</title>
        <authorList>
            <person name="Williams M.L."/>
            <person name="Gillaspy A.F."/>
            <person name="Dyer D.W."/>
            <person name="Thune R.L."/>
            <person name="Waldbieser G.C."/>
            <person name="Schuster S.C."/>
            <person name="Gipson J."/>
            <person name="Zaitshik J."/>
            <person name="Landry C."/>
            <person name="Lawrence M.L."/>
        </authorList>
    </citation>
    <scope>NUCLEOTIDE SEQUENCE [LARGE SCALE GENOMIC DNA]</scope>
    <source>
        <strain>93-146</strain>
    </source>
</reference>
<gene>
    <name evidence="1" type="primary">fmt</name>
    <name type="ordered locus">NT01EI_3561</name>
</gene>
<accession>C5BF18</accession>
<feature type="chain" id="PRO_1000203855" description="Methionyl-tRNA formyltransferase">
    <location>
        <begin position="1"/>
        <end position="315"/>
    </location>
</feature>
<feature type="binding site" evidence="1">
    <location>
        <begin position="113"/>
        <end position="116"/>
    </location>
    <ligand>
        <name>(6S)-5,6,7,8-tetrahydrofolate</name>
        <dbReference type="ChEBI" id="CHEBI:57453"/>
    </ligand>
</feature>
<sequence>MSHSLRIIFAGTPDFAARHLEALLASDHQIVGVFTQPDRPSGRGNKLTPSPVKALALQHDLPVFQPASLRPEENQRLVASLQADVMVVVAYGLILPQAVLDMPRLGCVNVHGSLLPRWRGAAPIQRALWAGDSETGVTIMQMDAGLDTGDMLLKLSCLITQDDTSATLYDKLSALGPQGLLTTLAQLADGRAQAQQQDDALACYAEKLSKEEARLDWQLPAEQLARCVRAFNPWPVSFFMLEGQPVKVWGANVLHQESDAQPGTIVGADKQGIAVATAQGILLLTQLQPAGKKSMAARDLLNSRKESFLAGTLLD</sequence>
<comment type="function">
    <text evidence="1">Attaches a formyl group to the free amino group of methionyl-tRNA(fMet). The formyl group appears to play a dual role in the initiator identity of N-formylmethionyl-tRNA by promoting its recognition by IF2 and preventing the misappropriation of this tRNA by the elongation apparatus.</text>
</comment>
<comment type="catalytic activity">
    <reaction evidence="1">
        <text>L-methionyl-tRNA(fMet) + (6R)-10-formyltetrahydrofolate = N-formyl-L-methionyl-tRNA(fMet) + (6S)-5,6,7,8-tetrahydrofolate + H(+)</text>
        <dbReference type="Rhea" id="RHEA:24380"/>
        <dbReference type="Rhea" id="RHEA-COMP:9952"/>
        <dbReference type="Rhea" id="RHEA-COMP:9953"/>
        <dbReference type="ChEBI" id="CHEBI:15378"/>
        <dbReference type="ChEBI" id="CHEBI:57453"/>
        <dbReference type="ChEBI" id="CHEBI:78530"/>
        <dbReference type="ChEBI" id="CHEBI:78844"/>
        <dbReference type="ChEBI" id="CHEBI:195366"/>
        <dbReference type="EC" id="2.1.2.9"/>
    </reaction>
</comment>
<comment type="similarity">
    <text evidence="1">Belongs to the Fmt family.</text>
</comment>
<dbReference type="EC" id="2.1.2.9" evidence="1"/>
<dbReference type="EMBL" id="CP001600">
    <property type="protein sequence ID" value="ACR70690.1"/>
    <property type="molecule type" value="Genomic_DNA"/>
</dbReference>
<dbReference type="RefSeq" id="WP_015872755.1">
    <property type="nucleotide sequence ID" value="NZ_CP169062.1"/>
</dbReference>
<dbReference type="SMR" id="C5BF18"/>
<dbReference type="STRING" id="67780.B6E78_09405"/>
<dbReference type="GeneID" id="69540404"/>
<dbReference type="KEGG" id="eic:NT01EI_3561"/>
<dbReference type="PATRIC" id="fig|634503.3.peg.3167"/>
<dbReference type="HOGENOM" id="CLU_033347_1_2_6"/>
<dbReference type="OrthoDB" id="9802815at2"/>
<dbReference type="Proteomes" id="UP000001485">
    <property type="component" value="Chromosome"/>
</dbReference>
<dbReference type="GO" id="GO:0005829">
    <property type="term" value="C:cytosol"/>
    <property type="evidence" value="ECO:0007669"/>
    <property type="project" value="TreeGrafter"/>
</dbReference>
<dbReference type="GO" id="GO:0004479">
    <property type="term" value="F:methionyl-tRNA formyltransferase activity"/>
    <property type="evidence" value="ECO:0007669"/>
    <property type="project" value="UniProtKB-UniRule"/>
</dbReference>
<dbReference type="CDD" id="cd08646">
    <property type="entry name" value="FMT_core_Met-tRNA-FMT_N"/>
    <property type="match status" value="1"/>
</dbReference>
<dbReference type="CDD" id="cd08704">
    <property type="entry name" value="Met_tRNA_FMT_C"/>
    <property type="match status" value="1"/>
</dbReference>
<dbReference type="FunFam" id="3.40.50.12230:FF:000001">
    <property type="entry name" value="Methionyl-tRNA formyltransferase"/>
    <property type="match status" value="1"/>
</dbReference>
<dbReference type="FunFam" id="3.40.50.170:FF:000003">
    <property type="entry name" value="Methionyl-tRNA formyltransferase"/>
    <property type="match status" value="1"/>
</dbReference>
<dbReference type="Gene3D" id="3.10.25.10">
    <property type="entry name" value="Formyl transferase, C-terminal domain"/>
    <property type="match status" value="1"/>
</dbReference>
<dbReference type="Gene3D" id="3.40.50.170">
    <property type="entry name" value="Formyl transferase, N-terminal domain"/>
    <property type="match status" value="1"/>
</dbReference>
<dbReference type="HAMAP" id="MF_00182">
    <property type="entry name" value="Formyl_trans"/>
    <property type="match status" value="1"/>
</dbReference>
<dbReference type="InterPro" id="IPR005794">
    <property type="entry name" value="Fmt"/>
</dbReference>
<dbReference type="InterPro" id="IPR005793">
    <property type="entry name" value="Formyl_trans_C"/>
</dbReference>
<dbReference type="InterPro" id="IPR037022">
    <property type="entry name" value="Formyl_trans_C_sf"/>
</dbReference>
<dbReference type="InterPro" id="IPR002376">
    <property type="entry name" value="Formyl_transf_N"/>
</dbReference>
<dbReference type="InterPro" id="IPR036477">
    <property type="entry name" value="Formyl_transf_N_sf"/>
</dbReference>
<dbReference type="InterPro" id="IPR011034">
    <property type="entry name" value="Formyl_transferase-like_C_sf"/>
</dbReference>
<dbReference type="InterPro" id="IPR001555">
    <property type="entry name" value="GART_AS"/>
</dbReference>
<dbReference type="InterPro" id="IPR044135">
    <property type="entry name" value="Met-tRNA-FMT_C"/>
</dbReference>
<dbReference type="InterPro" id="IPR041711">
    <property type="entry name" value="Met-tRNA-FMT_N"/>
</dbReference>
<dbReference type="NCBIfam" id="TIGR00460">
    <property type="entry name" value="fmt"/>
    <property type="match status" value="1"/>
</dbReference>
<dbReference type="PANTHER" id="PTHR11138">
    <property type="entry name" value="METHIONYL-TRNA FORMYLTRANSFERASE"/>
    <property type="match status" value="1"/>
</dbReference>
<dbReference type="PANTHER" id="PTHR11138:SF5">
    <property type="entry name" value="METHIONYL-TRNA FORMYLTRANSFERASE, MITOCHONDRIAL"/>
    <property type="match status" value="1"/>
</dbReference>
<dbReference type="Pfam" id="PF02911">
    <property type="entry name" value="Formyl_trans_C"/>
    <property type="match status" value="1"/>
</dbReference>
<dbReference type="Pfam" id="PF00551">
    <property type="entry name" value="Formyl_trans_N"/>
    <property type="match status" value="1"/>
</dbReference>
<dbReference type="SUPFAM" id="SSF50486">
    <property type="entry name" value="FMT C-terminal domain-like"/>
    <property type="match status" value="1"/>
</dbReference>
<dbReference type="SUPFAM" id="SSF53328">
    <property type="entry name" value="Formyltransferase"/>
    <property type="match status" value="1"/>
</dbReference>
<dbReference type="PROSITE" id="PS00373">
    <property type="entry name" value="GART"/>
    <property type="match status" value="1"/>
</dbReference>
<protein>
    <recommendedName>
        <fullName evidence="1">Methionyl-tRNA formyltransferase</fullName>
        <ecNumber evidence="1">2.1.2.9</ecNumber>
    </recommendedName>
</protein>
<organism>
    <name type="scientific">Edwardsiella ictaluri (strain 93-146)</name>
    <dbReference type="NCBI Taxonomy" id="634503"/>
    <lineage>
        <taxon>Bacteria</taxon>
        <taxon>Pseudomonadati</taxon>
        <taxon>Pseudomonadota</taxon>
        <taxon>Gammaproteobacteria</taxon>
        <taxon>Enterobacterales</taxon>
        <taxon>Hafniaceae</taxon>
        <taxon>Edwardsiella</taxon>
    </lineage>
</organism>
<evidence type="ECO:0000255" key="1">
    <source>
        <dbReference type="HAMAP-Rule" id="MF_00182"/>
    </source>
</evidence>
<keyword id="KW-0648">Protein biosynthesis</keyword>
<keyword id="KW-0808">Transferase</keyword>
<proteinExistence type="inferred from homology"/>